<proteinExistence type="inferred from homology"/>
<dbReference type="EC" id="2.7.1.11" evidence="1"/>
<dbReference type="EMBL" id="CP001127">
    <property type="protein sequence ID" value="ACF90768.1"/>
    <property type="molecule type" value="Genomic_DNA"/>
</dbReference>
<dbReference type="RefSeq" id="WP_000591793.1">
    <property type="nucleotide sequence ID" value="NC_011094.1"/>
</dbReference>
<dbReference type="SMR" id="B4TPS6"/>
<dbReference type="GeneID" id="66758327"/>
<dbReference type="KEGG" id="sew:SeSA_A4279"/>
<dbReference type="HOGENOM" id="CLU_020655_0_1_6"/>
<dbReference type="UniPathway" id="UPA00109">
    <property type="reaction ID" value="UER00182"/>
</dbReference>
<dbReference type="Proteomes" id="UP000001865">
    <property type="component" value="Chromosome"/>
</dbReference>
<dbReference type="GO" id="GO:0005945">
    <property type="term" value="C:6-phosphofructokinase complex"/>
    <property type="evidence" value="ECO:0007669"/>
    <property type="project" value="TreeGrafter"/>
</dbReference>
<dbReference type="GO" id="GO:0003872">
    <property type="term" value="F:6-phosphofructokinase activity"/>
    <property type="evidence" value="ECO:0007669"/>
    <property type="project" value="UniProtKB-UniRule"/>
</dbReference>
<dbReference type="GO" id="GO:0016208">
    <property type="term" value="F:AMP binding"/>
    <property type="evidence" value="ECO:0007669"/>
    <property type="project" value="TreeGrafter"/>
</dbReference>
<dbReference type="GO" id="GO:0005524">
    <property type="term" value="F:ATP binding"/>
    <property type="evidence" value="ECO:0007669"/>
    <property type="project" value="UniProtKB-KW"/>
</dbReference>
<dbReference type="GO" id="GO:0070095">
    <property type="term" value="F:fructose-6-phosphate binding"/>
    <property type="evidence" value="ECO:0007669"/>
    <property type="project" value="TreeGrafter"/>
</dbReference>
<dbReference type="GO" id="GO:0042802">
    <property type="term" value="F:identical protein binding"/>
    <property type="evidence" value="ECO:0007669"/>
    <property type="project" value="TreeGrafter"/>
</dbReference>
<dbReference type="GO" id="GO:0046872">
    <property type="term" value="F:metal ion binding"/>
    <property type="evidence" value="ECO:0007669"/>
    <property type="project" value="UniProtKB-KW"/>
</dbReference>
<dbReference type="GO" id="GO:0048029">
    <property type="term" value="F:monosaccharide binding"/>
    <property type="evidence" value="ECO:0007669"/>
    <property type="project" value="TreeGrafter"/>
</dbReference>
<dbReference type="GO" id="GO:0061621">
    <property type="term" value="P:canonical glycolysis"/>
    <property type="evidence" value="ECO:0007669"/>
    <property type="project" value="TreeGrafter"/>
</dbReference>
<dbReference type="GO" id="GO:0030388">
    <property type="term" value="P:fructose 1,6-bisphosphate metabolic process"/>
    <property type="evidence" value="ECO:0007669"/>
    <property type="project" value="TreeGrafter"/>
</dbReference>
<dbReference type="GO" id="GO:0006002">
    <property type="term" value="P:fructose 6-phosphate metabolic process"/>
    <property type="evidence" value="ECO:0007669"/>
    <property type="project" value="InterPro"/>
</dbReference>
<dbReference type="CDD" id="cd00763">
    <property type="entry name" value="Bacterial_PFK"/>
    <property type="match status" value="1"/>
</dbReference>
<dbReference type="FunFam" id="3.40.50.450:FF:000001">
    <property type="entry name" value="ATP-dependent 6-phosphofructokinase"/>
    <property type="match status" value="1"/>
</dbReference>
<dbReference type="FunFam" id="3.40.50.460:FF:000002">
    <property type="entry name" value="ATP-dependent 6-phosphofructokinase"/>
    <property type="match status" value="1"/>
</dbReference>
<dbReference type="Gene3D" id="3.40.50.450">
    <property type="match status" value="1"/>
</dbReference>
<dbReference type="Gene3D" id="3.40.50.460">
    <property type="entry name" value="Phosphofructokinase domain"/>
    <property type="match status" value="1"/>
</dbReference>
<dbReference type="HAMAP" id="MF_00339">
    <property type="entry name" value="Phosphofructokinase_I_B1"/>
    <property type="match status" value="1"/>
</dbReference>
<dbReference type="InterPro" id="IPR022953">
    <property type="entry name" value="ATP_PFK"/>
</dbReference>
<dbReference type="InterPro" id="IPR012003">
    <property type="entry name" value="ATP_PFK_prok-type"/>
</dbReference>
<dbReference type="InterPro" id="IPR012828">
    <property type="entry name" value="PFKA_ATP_prok"/>
</dbReference>
<dbReference type="InterPro" id="IPR015912">
    <property type="entry name" value="Phosphofructokinase_CS"/>
</dbReference>
<dbReference type="InterPro" id="IPR000023">
    <property type="entry name" value="Phosphofructokinase_dom"/>
</dbReference>
<dbReference type="InterPro" id="IPR035966">
    <property type="entry name" value="PKF_sf"/>
</dbReference>
<dbReference type="NCBIfam" id="TIGR02482">
    <property type="entry name" value="PFKA_ATP"/>
    <property type="match status" value="1"/>
</dbReference>
<dbReference type="NCBIfam" id="NF002872">
    <property type="entry name" value="PRK03202.1"/>
    <property type="match status" value="1"/>
</dbReference>
<dbReference type="PANTHER" id="PTHR13697:SF4">
    <property type="entry name" value="ATP-DEPENDENT 6-PHOSPHOFRUCTOKINASE"/>
    <property type="match status" value="1"/>
</dbReference>
<dbReference type="PANTHER" id="PTHR13697">
    <property type="entry name" value="PHOSPHOFRUCTOKINASE"/>
    <property type="match status" value="1"/>
</dbReference>
<dbReference type="Pfam" id="PF00365">
    <property type="entry name" value="PFK"/>
    <property type="match status" value="1"/>
</dbReference>
<dbReference type="PIRSF" id="PIRSF000532">
    <property type="entry name" value="ATP_PFK_prok"/>
    <property type="match status" value="1"/>
</dbReference>
<dbReference type="PRINTS" id="PR00476">
    <property type="entry name" value="PHFRCTKINASE"/>
</dbReference>
<dbReference type="SUPFAM" id="SSF53784">
    <property type="entry name" value="Phosphofructokinase"/>
    <property type="match status" value="1"/>
</dbReference>
<dbReference type="PROSITE" id="PS00433">
    <property type="entry name" value="PHOSPHOFRUCTOKINASE"/>
    <property type="match status" value="1"/>
</dbReference>
<organism>
    <name type="scientific">Salmonella schwarzengrund (strain CVM19633)</name>
    <dbReference type="NCBI Taxonomy" id="439843"/>
    <lineage>
        <taxon>Bacteria</taxon>
        <taxon>Pseudomonadati</taxon>
        <taxon>Pseudomonadota</taxon>
        <taxon>Gammaproteobacteria</taxon>
        <taxon>Enterobacterales</taxon>
        <taxon>Enterobacteriaceae</taxon>
        <taxon>Salmonella</taxon>
    </lineage>
</organism>
<evidence type="ECO:0000255" key="1">
    <source>
        <dbReference type="HAMAP-Rule" id="MF_00339"/>
    </source>
</evidence>
<reference key="1">
    <citation type="journal article" date="2011" name="J. Bacteriol.">
        <title>Comparative genomics of 28 Salmonella enterica isolates: evidence for CRISPR-mediated adaptive sublineage evolution.</title>
        <authorList>
            <person name="Fricke W.F."/>
            <person name="Mammel M.K."/>
            <person name="McDermott P.F."/>
            <person name="Tartera C."/>
            <person name="White D.G."/>
            <person name="Leclerc J.E."/>
            <person name="Ravel J."/>
            <person name="Cebula T.A."/>
        </authorList>
    </citation>
    <scope>NUCLEOTIDE SEQUENCE [LARGE SCALE GENOMIC DNA]</scope>
    <source>
        <strain>CVM19633</strain>
    </source>
</reference>
<sequence>MIKKIGVLTSGGDAPGMNAAIRGVVRAALTEGLEVMGIYDGYLGLYEDRMVQLDRYSVSDMINRGGTFLGSARFPEFRDENIRAVAIENLKKRGIDALVVIGGDGSYMGAKRLTEMGFPCIGLPGTIDNDIKGTDYTIGYFTALGTVVEAIDRLRDTSSSHQRISIVEVMGRYCGDLTLAAAIAGGCEFIVVPEVEFNREDLVAEIKAGIAKGKKHAIVAITEHMCDVDELAHFIEKETGRETRATVLGHIQRGGSPVPYDRILASRMGAYAIDLLLEGHGGRCVGIQNEQLVHHDIIDAIENMKRPFKSDWMECAKKLY</sequence>
<protein>
    <recommendedName>
        <fullName evidence="1">ATP-dependent 6-phosphofructokinase</fullName>
        <shortName evidence="1">ATP-PFK</shortName>
        <shortName evidence="1">Phosphofructokinase</shortName>
        <ecNumber evidence="1">2.7.1.11</ecNumber>
    </recommendedName>
    <alternativeName>
        <fullName evidence="1">Phosphohexokinase</fullName>
    </alternativeName>
</protein>
<comment type="function">
    <text evidence="1">Catalyzes the phosphorylation of D-fructose 6-phosphate to fructose 1,6-bisphosphate by ATP, the first committing step of glycolysis.</text>
</comment>
<comment type="catalytic activity">
    <reaction evidence="1">
        <text>beta-D-fructose 6-phosphate + ATP = beta-D-fructose 1,6-bisphosphate + ADP + H(+)</text>
        <dbReference type="Rhea" id="RHEA:16109"/>
        <dbReference type="ChEBI" id="CHEBI:15378"/>
        <dbReference type="ChEBI" id="CHEBI:30616"/>
        <dbReference type="ChEBI" id="CHEBI:32966"/>
        <dbReference type="ChEBI" id="CHEBI:57634"/>
        <dbReference type="ChEBI" id="CHEBI:456216"/>
        <dbReference type="EC" id="2.7.1.11"/>
    </reaction>
</comment>
<comment type="cofactor">
    <cofactor evidence="1">
        <name>Mg(2+)</name>
        <dbReference type="ChEBI" id="CHEBI:18420"/>
    </cofactor>
</comment>
<comment type="activity regulation">
    <text evidence="1">Allosterically activated by ADP and other diphosphonucleosides, and allosterically inhibited by phosphoenolpyruvate.</text>
</comment>
<comment type="pathway">
    <text evidence="1">Carbohydrate degradation; glycolysis; D-glyceraldehyde 3-phosphate and glycerone phosphate from D-glucose: step 3/4.</text>
</comment>
<comment type="subunit">
    <text evidence="1">Homotetramer.</text>
</comment>
<comment type="subcellular location">
    <subcellularLocation>
        <location evidence="1">Cytoplasm</location>
    </subcellularLocation>
</comment>
<comment type="similarity">
    <text evidence="1">Belongs to the phosphofructokinase type A (PFKA) family. ATP-dependent PFK group I subfamily. Prokaryotic clade 'B1' sub-subfamily.</text>
</comment>
<feature type="chain" id="PRO_1000120057" description="ATP-dependent 6-phosphofructokinase">
    <location>
        <begin position="1"/>
        <end position="320"/>
    </location>
</feature>
<feature type="active site" description="Proton acceptor" evidence="1">
    <location>
        <position position="128"/>
    </location>
</feature>
<feature type="binding site" evidence="1">
    <location>
        <position position="12"/>
    </location>
    <ligand>
        <name>ATP</name>
        <dbReference type="ChEBI" id="CHEBI:30616"/>
    </ligand>
</feature>
<feature type="binding site" evidence="1">
    <location>
        <begin position="22"/>
        <end position="26"/>
    </location>
    <ligand>
        <name>ADP</name>
        <dbReference type="ChEBI" id="CHEBI:456216"/>
        <note>allosteric activator; ligand shared between dimeric partners</note>
    </ligand>
</feature>
<feature type="binding site" evidence="1">
    <location>
        <begin position="55"/>
        <end position="60"/>
    </location>
    <ligand>
        <name>ADP</name>
        <dbReference type="ChEBI" id="CHEBI:456216"/>
        <note>allosteric activator; ligand shared between dimeric partners</note>
    </ligand>
</feature>
<feature type="binding site" evidence="1">
    <location>
        <begin position="73"/>
        <end position="74"/>
    </location>
    <ligand>
        <name>ATP</name>
        <dbReference type="ChEBI" id="CHEBI:30616"/>
    </ligand>
</feature>
<feature type="binding site" evidence="1">
    <location>
        <begin position="103"/>
        <end position="106"/>
    </location>
    <ligand>
        <name>ATP</name>
        <dbReference type="ChEBI" id="CHEBI:30616"/>
    </ligand>
</feature>
<feature type="binding site" evidence="1">
    <location>
        <position position="104"/>
    </location>
    <ligand>
        <name>Mg(2+)</name>
        <dbReference type="ChEBI" id="CHEBI:18420"/>
        <note>catalytic</note>
    </ligand>
</feature>
<feature type="binding site" description="in other chain" evidence="1">
    <location>
        <begin position="126"/>
        <end position="128"/>
    </location>
    <ligand>
        <name>substrate</name>
        <note>ligand shared between dimeric partners</note>
    </ligand>
</feature>
<feature type="binding site" description="in other chain" evidence="1">
    <location>
        <position position="155"/>
    </location>
    <ligand>
        <name>ADP</name>
        <dbReference type="ChEBI" id="CHEBI:456216"/>
        <note>allosteric activator; ligand shared between dimeric partners</note>
    </ligand>
</feature>
<feature type="binding site" evidence="1">
    <location>
        <position position="163"/>
    </location>
    <ligand>
        <name>substrate</name>
        <note>ligand shared between dimeric partners</note>
    </ligand>
</feature>
<feature type="binding site" description="in other chain" evidence="1">
    <location>
        <begin position="170"/>
        <end position="172"/>
    </location>
    <ligand>
        <name>substrate</name>
        <note>ligand shared between dimeric partners</note>
    </ligand>
</feature>
<feature type="binding site" description="in other chain" evidence="1">
    <location>
        <begin position="186"/>
        <end position="188"/>
    </location>
    <ligand>
        <name>ADP</name>
        <dbReference type="ChEBI" id="CHEBI:456216"/>
        <note>allosteric activator; ligand shared between dimeric partners</note>
    </ligand>
</feature>
<feature type="binding site" description="in other chain" evidence="1">
    <location>
        <position position="212"/>
    </location>
    <ligand>
        <name>ADP</name>
        <dbReference type="ChEBI" id="CHEBI:456216"/>
        <note>allosteric activator; ligand shared between dimeric partners</note>
    </ligand>
</feature>
<feature type="binding site" description="in other chain" evidence="1">
    <location>
        <begin position="214"/>
        <end position="216"/>
    </location>
    <ligand>
        <name>ADP</name>
        <dbReference type="ChEBI" id="CHEBI:456216"/>
        <note>allosteric activator; ligand shared between dimeric partners</note>
    </ligand>
</feature>
<feature type="binding site" description="in other chain" evidence="1">
    <location>
        <position position="223"/>
    </location>
    <ligand>
        <name>substrate</name>
        <note>ligand shared between dimeric partners</note>
    </ligand>
</feature>
<feature type="binding site" evidence="1">
    <location>
        <position position="244"/>
    </location>
    <ligand>
        <name>substrate</name>
        <note>ligand shared between dimeric partners</note>
    </ligand>
</feature>
<feature type="binding site" description="in other chain" evidence="1">
    <location>
        <begin position="250"/>
        <end position="253"/>
    </location>
    <ligand>
        <name>substrate</name>
        <note>ligand shared between dimeric partners</note>
    </ligand>
</feature>
<accession>B4TPS6</accession>
<keyword id="KW-0021">Allosteric enzyme</keyword>
<keyword id="KW-0067">ATP-binding</keyword>
<keyword id="KW-0963">Cytoplasm</keyword>
<keyword id="KW-0324">Glycolysis</keyword>
<keyword id="KW-0418">Kinase</keyword>
<keyword id="KW-0460">Magnesium</keyword>
<keyword id="KW-0479">Metal-binding</keyword>
<keyword id="KW-0547">Nucleotide-binding</keyword>
<keyword id="KW-0808">Transferase</keyword>
<name>PFKA_SALSV</name>
<gene>
    <name evidence="1" type="primary">pfkA</name>
    <name type="ordered locus">SeSA_A4279</name>
</gene>